<reference key="1">
    <citation type="journal article" date="2003" name="Nature">
        <title>Genome sequence of Bacillus cereus and comparative analysis with Bacillus anthracis.</title>
        <authorList>
            <person name="Ivanova N."/>
            <person name="Sorokin A."/>
            <person name="Anderson I."/>
            <person name="Galleron N."/>
            <person name="Candelon B."/>
            <person name="Kapatral V."/>
            <person name="Bhattacharyya A."/>
            <person name="Reznik G."/>
            <person name="Mikhailova N."/>
            <person name="Lapidus A."/>
            <person name="Chu L."/>
            <person name="Mazur M."/>
            <person name="Goltsman E."/>
            <person name="Larsen N."/>
            <person name="D'Souza M."/>
            <person name="Walunas T."/>
            <person name="Grechkin Y."/>
            <person name="Pusch G."/>
            <person name="Haselkorn R."/>
            <person name="Fonstein M."/>
            <person name="Ehrlich S.D."/>
            <person name="Overbeek R."/>
            <person name="Kyrpides N.C."/>
        </authorList>
    </citation>
    <scope>NUCLEOTIDE SEQUENCE [LARGE SCALE GENOMIC DNA]</scope>
    <source>
        <strain>ATCC 14579 / DSM 31 / CCUG 7414 / JCM 2152 / NBRC 15305 / NCIMB 9373 / NCTC 2599 / NRRL B-3711</strain>
    </source>
</reference>
<reference key="2">
    <citation type="journal article" date="2010" name="Biochem. Biophys. Res. Commun.">
        <title>Dimeric and tetrameric forms of enoyl-acyl carrier protein reductase from Bacillus cereus.</title>
        <authorList>
            <person name="Kim S.J."/>
            <person name="Ha B.H."/>
            <person name="Kim K.H."/>
            <person name="Hong S.K."/>
            <person name="Shin K.J."/>
            <person name="Suh S.W."/>
            <person name="Kim E.E."/>
        </authorList>
    </citation>
    <scope>X-RAY CRYSTALLOGRAPHY (2.20 ANGSTROMS) IN COMPLEX WITH NAD AND INHIBITOR</scope>
    <scope>SUBUNIT</scope>
</reference>
<sequence length="256" mass="27740">MELLQGKTFVVMGVANQRSIAWGIARSLHNAGAKLIFTYAGERLERNVRELADTLEGQESLVLPCDVTNDEELTACFETIKQEVGTIHGVAHCIAFANRDDLKGEFVDTSRDGFLLAQNISAFSLTAVAREAKKVMTEGGNILTLTYLGGERVVKNYNVMGVAKASLEASVKYLANDLGQHGIRVNAISAGPIRTLSAKGVGDFNSILREIEERAPLRRTTTQEEVGDTAVFLFSDLARGVTGENIHVDSGYHILG</sequence>
<protein>
    <recommendedName>
        <fullName>Enoyl-[acyl-carrier-protein] reductase [NADH] FabI</fullName>
        <shortName>ENR</shortName>
        <ecNumber>1.3.1.9</ecNumber>
    </recommendedName>
    <alternativeName>
        <fullName>NADH-dependent enoyl-ACP reductase</fullName>
    </alternativeName>
</protein>
<feature type="chain" id="PRO_0000407976" description="Enoyl-[acyl-carrier-protein] reductase [NADH] FabI">
    <location>
        <begin position="1"/>
        <end position="256"/>
    </location>
</feature>
<feature type="active site" description="Proton acceptor" evidence="1">
    <location>
        <position position="147"/>
    </location>
</feature>
<feature type="active site" description="Proton acceptor">
    <location>
        <position position="157"/>
    </location>
</feature>
<feature type="binding site" evidence="2">
    <location>
        <position position="13"/>
    </location>
    <ligand>
        <name>NAD(+)</name>
        <dbReference type="ChEBI" id="CHEBI:57540"/>
    </ligand>
</feature>
<feature type="binding site" evidence="2">
    <location>
        <begin position="19"/>
        <end position="20"/>
    </location>
    <ligand>
        <name>NAD(+)</name>
        <dbReference type="ChEBI" id="CHEBI:57540"/>
    </ligand>
</feature>
<feature type="binding site" evidence="2">
    <location>
        <begin position="66"/>
        <end position="67"/>
    </location>
    <ligand>
        <name>NAD(+)</name>
        <dbReference type="ChEBI" id="CHEBI:57540"/>
    </ligand>
</feature>
<feature type="binding site" evidence="2">
    <location>
        <position position="94"/>
    </location>
    <ligand>
        <name>NAD(+)</name>
        <dbReference type="ChEBI" id="CHEBI:57540"/>
    </ligand>
</feature>
<feature type="binding site">
    <location>
        <position position="97"/>
    </location>
    <ligand>
        <name>substrate</name>
    </ligand>
</feature>
<feature type="binding site" evidence="2">
    <location>
        <position position="164"/>
    </location>
    <ligand>
        <name>NAD(+)</name>
        <dbReference type="ChEBI" id="CHEBI:57540"/>
    </ligand>
</feature>
<feature type="binding site" evidence="2">
    <location>
        <begin position="193"/>
        <end position="197"/>
    </location>
    <ligand>
        <name>NAD(+)</name>
        <dbReference type="ChEBI" id="CHEBI:57540"/>
    </ligand>
</feature>
<feature type="site" description="Involved in acyl-ACP binding" evidence="1">
    <location>
        <position position="205"/>
    </location>
</feature>
<feature type="turn" evidence="6">
    <location>
        <begin position="3"/>
        <end position="6"/>
    </location>
</feature>
<feature type="strand" evidence="6">
    <location>
        <begin position="8"/>
        <end position="12"/>
    </location>
</feature>
<feature type="helix" evidence="6">
    <location>
        <begin position="20"/>
        <end position="30"/>
    </location>
</feature>
<feature type="strand" evidence="6">
    <location>
        <begin position="34"/>
        <end position="41"/>
    </location>
</feature>
<feature type="helix" evidence="6">
    <location>
        <begin position="42"/>
        <end position="53"/>
    </location>
</feature>
<feature type="strand" evidence="4">
    <location>
        <begin position="55"/>
        <end position="58"/>
    </location>
</feature>
<feature type="strand" evidence="6">
    <location>
        <begin position="61"/>
        <end position="64"/>
    </location>
</feature>
<feature type="helix" evidence="6">
    <location>
        <begin position="70"/>
        <end position="83"/>
    </location>
</feature>
<feature type="strand" evidence="6">
    <location>
        <begin position="88"/>
        <end position="92"/>
    </location>
</feature>
<feature type="helix" evidence="5">
    <location>
        <begin position="99"/>
        <end position="101"/>
    </location>
</feature>
<feature type="strand" evidence="4">
    <location>
        <begin position="102"/>
        <end position="104"/>
    </location>
</feature>
<feature type="helix" evidence="5">
    <location>
        <begin position="106"/>
        <end position="108"/>
    </location>
</feature>
<feature type="helix" evidence="6">
    <location>
        <begin position="113"/>
        <end position="132"/>
    </location>
</feature>
<feature type="turn" evidence="6">
    <location>
        <begin position="133"/>
        <end position="135"/>
    </location>
</feature>
<feature type="strand" evidence="6">
    <location>
        <begin position="140"/>
        <end position="147"/>
    </location>
</feature>
<feature type="helix" evidence="5">
    <location>
        <begin position="148"/>
        <end position="150"/>
    </location>
</feature>
<feature type="turn" evidence="5">
    <location>
        <begin position="155"/>
        <end position="157"/>
    </location>
</feature>
<feature type="helix" evidence="6">
    <location>
        <begin position="162"/>
        <end position="178"/>
    </location>
</feature>
<feature type="helix" evidence="6">
    <location>
        <begin position="179"/>
        <end position="181"/>
    </location>
</feature>
<feature type="strand" evidence="6">
    <location>
        <begin position="183"/>
        <end position="190"/>
    </location>
</feature>
<feature type="helix" evidence="4">
    <location>
        <begin position="196"/>
        <end position="198"/>
    </location>
</feature>
<feature type="strand" evidence="5">
    <location>
        <begin position="200"/>
        <end position="202"/>
    </location>
</feature>
<feature type="helix" evidence="6">
    <location>
        <begin position="205"/>
        <end position="214"/>
    </location>
</feature>
<feature type="helix" evidence="6">
    <location>
        <begin position="223"/>
        <end position="234"/>
    </location>
</feature>
<feature type="helix" evidence="6">
    <location>
        <begin position="236"/>
        <end position="238"/>
    </location>
</feature>
<feature type="strand" evidence="6">
    <location>
        <begin position="245"/>
        <end position="249"/>
    </location>
</feature>
<feature type="helix" evidence="6">
    <location>
        <begin position="252"/>
        <end position="255"/>
    </location>
</feature>
<organism>
    <name type="scientific">Bacillus cereus (strain ATCC 14579 / DSM 31 / CCUG 7414 / JCM 2152 / NBRC 15305 / NCIMB 9373 / NCTC 2599 / NRRL B-3711)</name>
    <dbReference type="NCBI Taxonomy" id="226900"/>
    <lineage>
        <taxon>Bacteria</taxon>
        <taxon>Bacillati</taxon>
        <taxon>Bacillota</taxon>
        <taxon>Bacilli</taxon>
        <taxon>Bacillales</taxon>
        <taxon>Bacillaceae</taxon>
        <taxon>Bacillus</taxon>
        <taxon>Bacillus cereus group</taxon>
    </lineage>
</organism>
<dbReference type="EC" id="1.3.1.9"/>
<dbReference type="EMBL" id="AE016877">
    <property type="protein sequence ID" value="AAP08201.1"/>
    <property type="molecule type" value="Genomic_DNA"/>
</dbReference>
<dbReference type="RefSeq" id="NP_831000.1">
    <property type="nucleotide sequence ID" value="NC_004722.1"/>
</dbReference>
<dbReference type="RefSeq" id="WP_000421886.1">
    <property type="nucleotide sequence ID" value="NZ_CP138336.1"/>
</dbReference>
<dbReference type="PDB" id="3OJE">
    <property type="method" value="X-ray"/>
    <property type="resolution" value="3.02 A"/>
    <property type="chains" value="A=1-256"/>
</dbReference>
<dbReference type="PDB" id="3OJF">
    <property type="method" value="X-ray"/>
    <property type="resolution" value="2.20 A"/>
    <property type="chains" value="A/B/C/D=1-256"/>
</dbReference>
<dbReference type="PDB" id="5YCR">
    <property type="method" value="X-ray"/>
    <property type="resolution" value="1.96 A"/>
    <property type="chains" value="A/B/C/D=1-256"/>
</dbReference>
<dbReference type="PDB" id="5YCS">
    <property type="method" value="X-ray"/>
    <property type="resolution" value="1.95 A"/>
    <property type="chains" value="A/B/C/D=1-256"/>
</dbReference>
<dbReference type="PDB" id="5YCV">
    <property type="method" value="X-ray"/>
    <property type="resolution" value="1.85 A"/>
    <property type="chains" value="A/B/C/D=1-256"/>
</dbReference>
<dbReference type="PDB" id="5YCX">
    <property type="method" value="X-ray"/>
    <property type="resolution" value="1.70 A"/>
    <property type="chains" value="A=1-256"/>
</dbReference>
<dbReference type="PDBsum" id="3OJE"/>
<dbReference type="PDBsum" id="3OJF"/>
<dbReference type="PDBsum" id="5YCR"/>
<dbReference type="PDBsum" id="5YCS"/>
<dbReference type="PDBsum" id="5YCV"/>
<dbReference type="PDBsum" id="5YCX"/>
<dbReference type="SMR" id="Q81GI3"/>
<dbReference type="STRING" id="226900.BC_1216"/>
<dbReference type="MetOSite" id="Q81GI3"/>
<dbReference type="GeneID" id="75084525"/>
<dbReference type="KEGG" id="bce:BC1216"/>
<dbReference type="PATRIC" id="fig|226900.8.peg.1186"/>
<dbReference type="HOGENOM" id="CLU_010194_10_1_9"/>
<dbReference type="OrthoDB" id="9803628at2"/>
<dbReference type="BRENDA" id="1.3.1.10">
    <property type="organism ID" value="648"/>
</dbReference>
<dbReference type="BRENDA" id="1.3.1.9">
    <property type="organism ID" value="648"/>
</dbReference>
<dbReference type="UniPathway" id="UPA00094"/>
<dbReference type="EvolutionaryTrace" id="Q81GI3"/>
<dbReference type="Proteomes" id="UP000001417">
    <property type="component" value="Chromosome"/>
</dbReference>
<dbReference type="GO" id="GO:1902494">
    <property type="term" value="C:catalytic complex"/>
    <property type="evidence" value="ECO:0000314"/>
    <property type="project" value="UniProtKB"/>
</dbReference>
<dbReference type="GO" id="GO:0004318">
    <property type="term" value="F:enoyl-[acyl-carrier-protein] reductase (NADH) activity"/>
    <property type="evidence" value="ECO:0000314"/>
    <property type="project" value="UniProtKB"/>
</dbReference>
<dbReference type="GO" id="GO:0141148">
    <property type="term" value="F:enoyl-[acyl-carrier-protein] reductase (NADPH) activity"/>
    <property type="evidence" value="ECO:0000314"/>
    <property type="project" value="UniProtKB"/>
</dbReference>
<dbReference type="GO" id="GO:0042802">
    <property type="term" value="F:identical protein binding"/>
    <property type="evidence" value="ECO:0000353"/>
    <property type="project" value="UniProtKB"/>
</dbReference>
<dbReference type="GO" id="GO:0070401">
    <property type="term" value="F:NADP+ binding"/>
    <property type="evidence" value="ECO:0000314"/>
    <property type="project" value="UniProtKB"/>
</dbReference>
<dbReference type="GO" id="GO:0036094">
    <property type="term" value="F:small molecule binding"/>
    <property type="evidence" value="ECO:0000269"/>
    <property type="project" value="DisProt"/>
</dbReference>
<dbReference type="GO" id="GO:0030497">
    <property type="term" value="P:fatty acid elongation"/>
    <property type="evidence" value="ECO:0000250"/>
    <property type="project" value="UniProtKB"/>
</dbReference>
<dbReference type="CDD" id="cd05372">
    <property type="entry name" value="ENR_SDR"/>
    <property type="match status" value="1"/>
</dbReference>
<dbReference type="FunFam" id="3.40.50.720:FF:000127">
    <property type="entry name" value="Enoyl-[acyl-carrier-protein] reductase [NADH]"/>
    <property type="match status" value="1"/>
</dbReference>
<dbReference type="Gene3D" id="3.40.50.720">
    <property type="entry name" value="NAD(P)-binding Rossmann-like Domain"/>
    <property type="match status" value="1"/>
</dbReference>
<dbReference type="InterPro" id="IPR014358">
    <property type="entry name" value="Enoyl-ACP_Rdtase_NADH"/>
</dbReference>
<dbReference type="InterPro" id="IPR036291">
    <property type="entry name" value="NAD(P)-bd_dom_sf"/>
</dbReference>
<dbReference type="InterPro" id="IPR002347">
    <property type="entry name" value="SDR_fam"/>
</dbReference>
<dbReference type="NCBIfam" id="NF006369">
    <property type="entry name" value="PRK08594.1"/>
    <property type="match status" value="1"/>
</dbReference>
<dbReference type="PANTHER" id="PTHR43159">
    <property type="entry name" value="ENOYL-[ACYL-CARRIER-PROTEIN] REDUCTASE"/>
    <property type="match status" value="1"/>
</dbReference>
<dbReference type="PANTHER" id="PTHR43159:SF2">
    <property type="entry name" value="ENOYL-[ACYL-CARRIER-PROTEIN] REDUCTASE [NADH], CHLOROPLASTIC"/>
    <property type="match status" value="1"/>
</dbReference>
<dbReference type="Pfam" id="PF13561">
    <property type="entry name" value="adh_short_C2"/>
    <property type="match status" value="1"/>
</dbReference>
<dbReference type="PIRSF" id="PIRSF000094">
    <property type="entry name" value="Enoyl-ACP_rdct"/>
    <property type="match status" value="1"/>
</dbReference>
<dbReference type="PRINTS" id="PR00081">
    <property type="entry name" value="GDHRDH"/>
</dbReference>
<dbReference type="SUPFAM" id="SSF51735">
    <property type="entry name" value="NAD(P)-binding Rossmann-fold domains"/>
    <property type="match status" value="1"/>
</dbReference>
<evidence type="ECO:0000250" key="1"/>
<evidence type="ECO:0000269" key="2">
    <source>
    </source>
</evidence>
<evidence type="ECO:0000305" key="3"/>
<evidence type="ECO:0007829" key="4">
    <source>
        <dbReference type="PDB" id="3OJF"/>
    </source>
</evidence>
<evidence type="ECO:0007829" key="5">
    <source>
        <dbReference type="PDB" id="5YCV"/>
    </source>
</evidence>
<evidence type="ECO:0007829" key="6">
    <source>
        <dbReference type="PDB" id="5YCX"/>
    </source>
</evidence>
<keyword id="KW-0002">3D-structure</keyword>
<keyword id="KW-0275">Fatty acid biosynthesis</keyword>
<keyword id="KW-0276">Fatty acid metabolism</keyword>
<keyword id="KW-0444">Lipid biosynthesis</keyword>
<keyword id="KW-0443">Lipid metabolism</keyword>
<keyword id="KW-0520">NAD</keyword>
<keyword id="KW-0521">NADP</keyword>
<keyword id="KW-0547">Nucleotide-binding</keyword>
<keyword id="KW-0560">Oxidoreductase</keyword>
<keyword id="KW-1185">Reference proteome</keyword>
<gene>
    <name type="primary">fabI</name>
    <name type="ordered locus">BC_1216</name>
</gene>
<comment type="function">
    <text evidence="1">Catalyzes the reduction of a carbon-carbon double bond in an enoyl moiety that is covalently linked to an acyl carrier protein (ACP). Involved in the elongation cycle of fatty acid which are used in the lipid metabolism (By similarity).</text>
</comment>
<comment type="catalytic activity">
    <reaction>
        <text>a 2,3-saturated acyl-[ACP] + NAD(+) = a (2E)-enoyl-[ACP] + NADH + H(+)</text>
        <dbReference type="Rhea" id="RHEA:10240"/>
        <dbReference type="Rhea" id="RHEA-COMP:9925"/>
        <dbReference type="Rhea" id="RHEA-COMP:9926"/>
        <dbReference type="ChEBI" id="CHEBI:15378"/>
        <dbReference type="ChEBI" id="CHEBI:57540"/>
        <dbReference type="ChEBI" id="CHEBI:57945"/>
        <dbReference type="ChEBI" id="CHEBI:78784"/>
        <dbReference type="ChEBI" id="CHEBI:78785"/>
        <dbReference type="EC" id="1.3.1.9"/>
    </reaction>
</comment>
<comment type="pathway">
    <text>Lipid metabolism; fatty acid biosynthesis.</text>
</comment>
<comment type="subunit">
    <text evidence="2">Homotetramer.</text>
</comment>
<comment type="similarity">
    <text evidence="3">Belongs to the short-chain dehydrogenases/reductases (SDR) family. FabI subfamily.</text>
</comment>
<name>FABI_BACCR</name>
<proteinExistence type="evidence at protein level"/>
<accession>Q81GI3</accession>